<name>ENDA_THEGJ</name>
<sequence length="168" mass="19800">MIVFYLSGDRVFSTDQNAINGLYNKRHFGKLVEGKLFLSLLEATYLVERGKIEVREGKRKLTVEELMNLGRERDELFDAKYLVYKDLRDRGYTVKSGLKFGSHFRVYRRGMDEHSQWLVWVLPENSRLSPNDITARVRVAHGVRKNMIMAIVDEDADVTYYKVEWVRF</sequence>
<dbReference type="EC" id="4.6.1.16" evidence="1"/>
<dbReference type="EMBL" id="CP001398">
    <property type="protein sequence ID" value="ACS34558.1"/>
    <property type="molecule type" value="Genomic_DNA"/>
</dbReference>
<dbReference type="RefSeq" id="WP_015859661.1">
    <property type="nucleotide sequence ID" value="NC_012804.1"/>
</dbReference>
<dbReference type="SMR" id="C5A2D9"/>
<dbReference type="STRING" id="593117.TGAM_2056"/>
<dbReference type="PaxDb" id="593117-TGAM_2056"/>
<dbReference type="GeneID" id="7988622"/>
<dbReference type="KEGG" id="tga:TGAM_2056"/>
<dbReference type="PATRIC" id="fig|593117.10.peg.2067"/>
<dbReference type="eggNOG" id="arCOG01701">
    <property type="taxonomic scope" value="Archaea"/>
</dbReference>
<dbReference type="HOGENOM" id="CLU_114393_0_0_2"/>
<dbReference type="OrthoDB" id="46045at2157"/>
<dbReference type="Proteomes" id="UP000001488">
    <property type="component" value="Chromosome"/>
</dbReference>
<dbReference type="GO" id="GO:0005737">
    <property type="term" value="C:cytoplasm"/>
    <property type="evidence" value="ECO:0007669"/>
    <property type="project" value="TreeGrafter"/>
</dbReference>
<dbReference type="GO" id="GO:0016829">
    <property type="term" value="F:lyase activity"/>
    <property type="evidence" value="ECO:0007669"/>
    <property type="project" value="UniProtKB-KW"/>
</dbReference>
<dbReference type="GO" id="GO:0003676">
    <property type="term" value="F:nucleic acid binding"/>
    <property type="evidence" value="ECO:0007669"/>
    <property type="project" value="InterPro"/>
</dbReference>
<dbReference type="GO" id="GO:0000213">
    <property type="term" value="F:tRNA-intron endonuclease activity"/>
    <property type="evidence" value="ECO:0007669"/>
    <property type="project" value="UniProtKB-UniRule"/>
</dbReference>
<dbReference type="GO" id="GO:0006388">
    <property type="term" value="P:tRNA splicing, via endonucleolytic cleavage and ligation"/>
    <property type="evidence" value="ECO:0007669"/>
    <property type="project" value="UniProtKB-UniRule"/>
</dbReference>
<dbReference type="CDD" id="cd22363">
    <property type="entry name" value="tRNA-intron_lyase_C"/>
    <property type="match status" value="1"/>
</dbReference>
<dbReference type="FunFam" id="3.40.1350.10:FF:000006">
    <property type="entry name" value="tRNA-splicing endonuclease"/>
    <property type="match status" value="1"/>
</dbReference>
<dbReference type="Gene3D" id="3.40.1350.10">
    <property type="match status" value="1"/>
</dbReference>
<dbReference type="Gene3D" id="3.40.1170.20">
    <property type="entry name" value="tRNA intron endonuclease, N-terminal domain"/>
    <property type="match status" value="1"/>
</dbReference>
<dbReference type="HAMAP" id="MF_01833">
    <property type="entry name" value="EndA_short"/>
    <property type="match status" value="1"/>
</dbReference>
<dbReference type="InterPro" id="IPR011856">
    <property type="entry name" value="tRNA_endonuc-like_dom_sf"/>
</dbReference>
<dbReference type="InterPro" id="IPR036167">
    <property type="entry name" value="tRNA_intron_Endo_cat-like_sf"/>
</dbReference>
<dbReference type="InterPro" id="IPR006677">
    <property type="entry name" value="tRNA_intron_Endonuc_cat-like"/>
</dbReference>
<dbReference type="InterPro" id="IPR006678">
    <property type="entry name" value="tRNA_intron_Endonuc_N"/>
</dbReference>
<dbReference type="InterPro" id="IPR036740">
    <property type="entry name" value="tRNA_intron_Endonuc_N_sf"/>
</dbReference>
<dbReference type="InterPro" id="IPR006676">
    <property type="entry name" value="tRNA_splic"/>
</dbReference>
<dbReference type="InterPro" id="IPR016442">
    <property type="entry name" value="tRNA_splic_arch_short"/>
</dbReference>
<dbReference type="NCBIfam" id="TIGR00324">
    <property type="entry name" value="endA"/>
    <property type="match status" value="1"/>
</dbReference>
<dbReference type="PANTHER" id="PTHR21227">
    <property type="entry name" value="TRNA-SPLICING ENDONUCLEASE SUBUNIT SEN2"/>
    <property type="match status" value="1"/>
</dbReference>
<dbReference type="PANTHER" id="PTHR21227:SF0">
    <property type="entry name" value="TRNA-SPLICING ENDONUCLEASE SUBUNIT SEN2"/>
    <property type="match status" value="1"/>
</dbReference>
<dbReference type="Pfam" id="PF01974">
    <property type="entry name" value="tRNA_int_endo"/>
    <property type="match status" value="1"/>
</dbReference>
<dbReference type="Pfam" id="PF02778">
    <property type="entry name" value="tRNA_int_endo_N"/>
    <property type="match status" value="1"/>
</dbReference>
<dbReference type="PIRSF" id="PIRSF005285">
    <property type="entry name" value="tRNA_splic_archaea"/>
    <property type="match status" value="1"/>
</dbReference>
<dbReference type="SUPFAM" id="SSF53032">
    <property type="entry name" value="tRNA-intron endonuclease catalytic domain-like"/>
    <property type="match status" value="1"/>
</dbReference>
<dbReference type="SUPFAM" id="SSF55267">
    <property type="entry name" value="tRNA-intron endonuclease N-terminal domain-like"/>
    <property type="match status" value="1"/>
</dbReference>
<reference key="1">
    <citation type="journal article" date="2007" name="Genome Biol.">
        <title>Genome analysis and genome-wide proteomics of Thermococcus gammatolerans, the most radioresistant organism known amongst the Archaea.</title>
        <authorList>
            <person name="Zivanovic Y."/>
            <person name="Armengaud J."/>
            <person name="Lagorce A."/>
            <person name="Leplat C."/>
            <person name="Guerin P."/>
            <person name="Dutertre M."/>
            <person name="Anthouard V."/>
            <person name="Forterre P."/>
            <person name="Wincker P."/>
            <person name="Confalonieri F."/>
        </authorList>
    </citation>
    <scope>NUCLEOTIDE SEQUENCE [LARGE SCALE GENOMIC DNA]</scope>
    <source>
        <strain>DSM 15229 / JCM 11827 / EJ3</strain>
    </source>
</reference>
<evidence type="ECO:0000255" key="1">
    <source>
        <dbReference type="HAMAP-Rule" id="MF_01833"/>
    </source>
</evidence>
<accession>C5A2D9</accession>
<keyword id="KW-0456">Lyase</keyword>
<keyword id="KW-1185">Reference proteome</keyword>
<keyword id="KW-0819">tRNA processing</keyword>
<gene>
    <name evidence="1" type="primary">endA</name>
    <name type="ordered locus">TGAM_2056</name>
</gene>
<protein>
    <recommendedName>
        <fullName evidence="1">tRNA-splicing endonuclease</fullName>
        <ecNumber evidence="1">4.6.1.16</ecNumber>
    </recommendedName>
    <alternativeName>
        <fullName evidence="1">tRNA-intron endonuclease</fullName>
    </alternativeName>
</protein>
<feature type="chain" id="PRO_1000216085" description="tRNA-splicing endonuclease">
    <location>
        <begin position="1"/>
        <end position="168"/>
    </location>
</feature>
<feature type="active site" evidence="1">
    <location>
        <position position="107"/>
    </location>
</feature>
<feature type="active site" evidence="1">
    <location>
        <position position="114"/>
    </location>
</feature>
<feature type="active site" evidence="1">
    <location>
        <position position="145"/>
    </location>
</feature>
<proteinExistence type="inferred from homology"/>
<organism>
    <name type="scientific">Thermococcus gammatolerans (strain DSM 15229 / JCM 11827 / EJ3)</name>
    <dbReference type="NCBI Taxonomy" id="593117"/>
    <lineage>
        <taxon>Archaea</taxon>
        <taxon>Methanobacteriati</taxon>
        <taxon>Methanobacteriota</taxon>
        <taxon>Thermococci</taxon>
        <taxon>Thermococcales</taxon>
        <taxon>Thermococcaceae</taxon>
        <taxon>Thermococcus</taxon>
    </lineage>
</organism>
<comment type="function">
    <text evidence="1">Endonuclease that removes tRNA introns. Cleaves pre-tRNA at the 5'- and 3'-splice sites to release the intron. The products are an intron and two tRNA half-molecules bearing 2',3' cyclic phosphate and 5'-OH termini. Recognizes a pseudosymmetric substrate in which 2 bulged loops of 3 bases are separated by a stem of 4 bp.</text>
</comment>
<comment type="catalytic activity">
    <reaction evidence="1">
        <text>pretRNA = a 3'-half-tRNA molecule with a 5'-OH end + a 5'-half-tRNA molecule with a 2',3'-cyclic phosphate end + an intron with a 2',3'-cyclic phosphate and a 5'-hydroxyl terminus.</text>
        <dbReference type="EC" id="4.6.1.16"/>
    </reaction>
</comment>
<comment type="subunit">
    <text evidence="1">Homotetramer; although the tetramer contains four active sites, only two participate in the cleavage. Therefore, it should be considered as a dimer of dimers.</text>
</comment>
<comment type="similarity">
    <text evidence="1">Belongs to the tRNA-intron endonuclease family. Archaeal short subfamily.</text>
</comment>